<evidence type="ECO:0000255" key="1">
    <source>
        <dbReference type="HAMAP-Rule" id="MF_01678"/>
    </source>
</evidence>
<evidence type="ECO:0000305" key="2"/>
<feature type="chain" id="PRO_0000357259" description="Methylthioribose-1-phosphate isomerase">
    <location>
        <begin position="1"/>
        <end position="346"/>
    </location>
</feature>
<feature type="active site" description="Proton donor" evidence="1">
    <location>
        <position position="237"/>
    </location>
</feature>
<feature type="binding site" evidence="1">
    <location>
        <begin position="48"/>
        <end position="50"/>
    </location>
    <ligand>
        <name>substrate</name>
    </ligand>
</feature>
<feature type="binding site" evidence="1">
    <location>
        <position position="91"/>
    </location>
    <ligand>
        <name>substrate</name>
    </ligand>
</feature>
<feature type="binding site" evidence="1">
    <location>
        <position position="196"/>
    </location>
    <ligand>
        <name>substrate</name>
    </ligand>
</feature>
<feature type="binding site" evidence="1">
    <location>
        <begin position="247"/>
        <end position="248"/>
    </location>
    <ligand>
        <name>substrate</name>
    </ligand>
</feature>
<feature type="site" description="Transition state stabilizer" evidence="1">
    <location>
        <position position="157"/>
    </location>
</feature>
<reference key="1">
    <citation type="submission" date="2007-05" db="EMBL/GenBank/DDBJ databases">
        <title>Complete sequence of Thermosipho melanesiensis BI429.</title>
        <authorList>
            <consortium name="US DOE Joint Genome Institute"/>
            <person name="Copeland A."/>
            <person name="Lucas S."/>
            <person name="Lapidus A."/>
            <person name="Barry K."/>
            <person name="Glavina del Rio T."/>
            <person name="Dalin E."/>
            <person name="Tice H."/>
            <person name="Pitluck S."/>
            <person name="Chertkov O."/>
            <person name="Brettin T."/>
            <person name="Bruce D."/>
            <person name="Detter J.C."/>
            <person name="Han C."/>
            <person name="Schmutz J."/>
            <person name="Larimer F."/>
            <person name="Land M."/>
            <person name="Hauser L."/>
            <person name="Kyrpides N."/>
            <person name="Mikhailova N."/>
            <person name="Nelson K."/>
            <person name="Gogarten J.P."/>
            <person name="Noll K."/>
            <person name="Richardson P."/>
        </authorList>
    </citation>
    <scope>NUCLEOTIDE SEQUENCE [LARGE SCALE GENOMIC DNA]</scope>
    <source>
        <strain>DSM 12029 / CIP 104789 / BI429</strain>
    </source>
</reference>
<dbReference type="EC" id="5.3.1.23" evidence="1"/>
<dbReference type="EMBL" id="CP000716">
    <property type="protein sequence ID" value="ABR30128.1"/>
    <property type="molecule type" value="Genomic_DNA"/>
</dbReference>
<dbReference type="RefSeq" id="WP_012056489.1">
    <property type="nucleotide sequence ID" value="NC_009616.1"/>
</dbReference>
<dbReference type="SMR" id="A6LJM7"/>
<dbReference type="STRING" id="391009.Tmel_0254"/>
<dbReference type="KEGG" id="tme:Tmel_0254"/>
<dbReference type="eggNOG" id="COG0182">
    <property type="taxonomic scope" value="Bacteria"/>
</dbReference>
<dbReference type="HOGENOM" id="CLU_016218_1_2_0"/>
<dbReference type="OrthoDB" id="9803436at2"/>
<dbReference type="UniPathway" id="UPA00904">
    <property type="reaction ID" value="UER00874"/>
</dbReference>
<dbReference type="Proteomes" id="UP000001110">
    <property type="component" value="Chromosome"/>
</dbReference>
<dbReference type="GO" id="GO:0046523">
    <property type="term" value="F:S-methyl-5-thioribose-1-phosphate isomerase activity"/>
    <property type="evidence" value="ECO:0007669"/>
    <property type="project" value="UniProtKB-UniRule"/>
</dbReference>
<dbReference type="GO" id="GO:0019509">
    <property type="term" value="P:L-methionine salvage from methylthioadenosine"/>
    <property type="evidence" value="ECO:0007669"/>
    <property type="project" value="UniProtKB-UniRule"/>
</dbReference>
<dbReference type="FunFam" id="1.20.120.420:FF:000003">
    <property type="entry name" value="Methylthioribose-1-phosphate isomerase"/>
    <property type="match status" value="1"/>
</dbReference>
<dbReference type="FunFam" id="3.40.50.10470:FF:000010">
    <property type="entry name" value="Methylthioribose-1-phosphate isomerase"/>
    <property type="match status" value="1"/>
</dbReference>
<dbReference type="Gene3D" id="1.20.120.420">
    <property type="entry name" value="translation initiation factor eif-2b, domain 1"/>
    <property type="match status" value="1"/>
</dbReference>
<dbReference type="Gene3D" id="3.40.50.10470">
    <property type="entry name" value="Translation initiation factor eif-2b, domain 2"/>
    <property type="match status" value="1"/>
</dbReference>
<dbReference type="HAMAP" id="MF_01678">
    <property type="entry name" value="Salvage_MtnA"/>
    <property type="match status" value="1"/>
</dbReference>
<dbReference type="InterPro" id="IPR000649">
    <property type="entry name" value="IF-2B-related"/>
</dbReference>
<dbReference type="InterPro" id="IPR005251">
    <property type="entry name" value="IF-M1Pi"/>
</dbReference>
<dbReference type="InterPro" id="IPR042529">
    <property type="entry name" value="IF_2B-like_C"/>
</dbReference>
<dbReference type="InterPro" id="IPR011559">
    <property type="entry name" value="Initiation_fac_2B_a/b/d"/>
</dbReference>
<dbReference type="InterPro" id="IPR027363">
    <property type="entry name" value="M1Pi_N"/>
</dbReference>
<dbReference type="InterPro" id="IPR037171">
    <property type="entry name" value="NagB/RpiA_transferase-like"/>
</dbReference>
<dbReference type="NCBIfam" id="TIGR00524">
    <property type="entry name" value="eIF-2B_rel"/>
    <property type="match status" value="1"/>
</dbReference>
<dbReference type="NCBIfam" id="NF004326">
    <property type="entry name" value="PRK05720.1"/>
    <property type="match status" value="1"/>
</dbReference>
<dbReference type="NCBIfam" id="TIGR00512">
    <property type="entry name" value="salvage_mtnA"/>
    <property type="match status" value="1"/>
</dbReference>
<dbReference type="PANTHER" id="PTHR43475">
    <property type="entry name" value="METHYLTHIORIBOSE-1-PHOSPHATE ISOMERASE"/>
    <property type="match status" value="1"/>
</dbReference>
<dbReference type="PANTHER" id="PTHR43475:SF1">
    <property type="entry name" value="METHYLTHIORIBOSE-1-PHOSPHATE ISOMERASE"/>
    <property type="match status" value="1"/>
</dbReference>
<dbReference type="Pfam" id="PF01008">
    <property type="entry name" value="IF-2B"/>
    <property type="match status" value="1"/>
</dbReference>
<dbReference type="SUPFAM" id="SSF100950">
    <property type="entry name" value="NagB/RpiA/CoA transferase-like"/>
    <property type="match status" value="1"/>
</dbReference>
<name>MTNA_THEM4</name>
<protein>
    <recommendedName>
        <fullName evidence="1">Methylthioribose-1-phosphate isomerase</fullName>
        <shortName evidence="1">M1Pi</shortName>
        <shortName evidence="1">MTR-1-P isomerase</shortName>
        <ecNumber evidence="1">5.3.1.23</ecNumber>
    </recommendedName>
    <alternativeName>
        <fullName evidence="1">S-methyl-5-thioribose-1-phosphate isomerase</fullName>
    </alternativeName>
</protein>
<comment type="function">
    <text evidence="1">Catalyzes the interconversion of methylthioribose-1-phosphate (MTR-1-P) into methylthioribulose-1-phosphate (MTRu-1-P).</text>
</comment>
<comment type="catalytic activity">
    <reaction evidence="1">
        <text>5-(methylsulfanyl)-alpha-D-ribose 1-phosphate = 5-(methylsulfanyl)-D-ribulose 1-phosphate</text>
        <dbReference type="Rhea" id="RHEA:19989"/>
        <dbReference type="ChEBI" id="CHEBI:58533"/>
        <dbReference type="ChEBI" id="CHEBI:58548"/>
        <dbReference type="EC" id="5.3.1.23"/>
    </reaction>
</comment>
<comment type="pathway">
    <text evidence="1">Amino-acid biosynthesis; L-methionine biosynthesis via salvage pathway; L-methionine from S-methyl-5-thio-alpha-D-ribose 1-phosphate: step 1/6.</text>
</comment>
<comment type="similarity">
    <text evidence="2">Belongs to the eIF-2B alpha/beta/delta subunits family. MtnA subfamily.</text>
</comment>
<organism>
    <name type="scientific">Thermosipho melanesiensis (strain DSM 12029 / CIP 104789 / BI429)</name>
    <dbReference type="NCBI Taxonomy" id="391009"/>
    <lineage>
        <taxon>Bacteria</taxon>
        <taxon>Thermotogati</taxon>
        <taxon>Thermotogota</taxon>
        <taxon>Thermotogae</taxon>
        <taxon>Thermotogales</taxon>
        <taxon>Fervidobacteriaceae</taxon>
        <taxon>Thermosipho</taxon>
    </lineage>
</organism>
<keyword id="KW-0028">Amino-acid biosynthesis</keyword>
<keyword id="KW-0413">Isomerase</keyword>
<keyword id="KW-0486">Methionine biosynthesis</keyword>
<gene>
    <name evidence="1" type="primary">mtnA</name>
    <name type="ordered locus">Tmel_0254</name>
</gene>
<accession>A6LJM7</accession>
<sequence>MKLKTMTMEWTGDELILIDQRKIPLKEEYMSCKTYKEVALAIKEMVVRGAPAIGASAAFGYVLGAREKFVEDFEAFVEKMREVKEVLANTRPTAVNLFWALNRMENALRKYGKVEGVLEFLENEALNIAKEDIEVNMAIGRYGAQLLKDGDTVLTHCNAGALATVDYGTALGVIRAAVEQGKRIKVFADETRPYLQGARLTAWELMKDGIDVTLISDNMSGWAMKLGKINAVIVGADRVASNGDVANKIGTYMVAVLAKRHGIPFYVAAPTSTIDLNTQTGKDIPIEERKHTEVTHCGGTQIAPDNVKVFNPAFDVTNAELITAIITEKGIVYPPYEENLKKLFEE</sequence>
<proteinExistence type="inferred from homology"/>